<proteinExistence type="evidence at protein level"/>
<protein>
    <recommendedName>
        <fullName evidence="4">RxLR effector protein PITG_18683</fullName>
    </recommendedName>
    <alternativeName>
        <fullName evidence="4">Avrblb2-like effector PITG_18683</fullName>
    </alternativeName>
</protein>
<accession>D0NZB7</accession>
<name>BLB2B_PHYIT</name>
<comment type="function">
    <text evidence="3">Secreted effector that associates with calmodulin to interfere with plant defense-associated calcium signaling in hosts.</text>
</comment>
<comment type="subunit">
    <text evidence="3">Interacts with the host calmodulin.</text>
</comment>
<comment type="subcellular location">
    <subcellularLocation>
        <location evidence="3">Secreted</location>
    </subcellularLocation>
    <subcellularLocation>
        <location evidence="3">Host cell</location>
    </subcellularLocation>
</comment>
<comment type="domain">
    <text evidence="6">The RxLR-dEER motif acts to carry the protein into the host cell cytoplasm through binding to cell surface phosphatidylinositol-3-phosphate.</text>
</comment>
<comment type="domain">
    <text evidence="1">The amino acids 78-82 in the C-terminal region of are important for binding to host calmodulin.</text>
</comment>
<comment type="similarity">
    <text evidence="5">Belongs to the RxLR effector family.</text>
</comment>
<evidence type="ECO:0000250" key="1">
    <source>
        <dbReference type="UniProtKB" id="D0P1A8"/>
    </source>
</evidence>
<evidence type="ECO:0000255" key="2"/>
<evidence type="ECO:0000269" key="3">
    <source>
    </source>
</evidence>
<evidence type="ECO:0000303" key="4">
    <source>
    </source>
</evidence>
<evidence type="ECO:0000305" key="5"/>
<evidence type="ECO:0000305" key="6">
    <source>
    </source>
</evidence>
<feature type="signal peptide" evidence="2">
    <location>
        <begin position="1"/>
        <end position="22"/>
    </location>
</feature>
<feature type="chain" id="PRO_5003013735" description="RxLR effector protein PITG_18683">
    <location>
        <begin position="23"/>
        <end position="100"/>
    </location>
</feature>
<feature type="short sequence motif" description="RxLR-dEER" evidence="6">
    <location>
        <begin position="43"/>
        <end position="57"/>
    </location>
</feature>
<feature type="short sequence motif" description="Calmodulin-binding motif" evidence="1">
    <location>
        <begin position="78"/>
        <end position="82"/>
    </location>
</feature>
<dbReference type="EMBL" id="DS028196">
    <property type="protein sequence ID" value="EEY68926.1"/>
    <property type="molecule type" value="Genomic_DNA"/>
</dbReference>
<dbReference type="RefSeq" id="XP_002997312.1">
    <property type="nucleotide sequence ID" value="XM_002997266.1"/>
</dbReference>
<dbReference type="EnsemblProtists" id="PITG_18683T0">
    <property type="protein sequence ID" value="PITG_18683T0"/>
    <property type="gene ID" value="PITG_18683"/>
</dbReference>
<dbReference type="GeneID" id="9477120"/>
<dbReference type="KEGG" id="pif:PITG_18683"/>
<dbReference type="VEuPathDB" id="FungiDB:PITG_18683"/>
<dbReference type="HOGENOM" id="CLU_158959_0_0_1"/>
<dbReference type="InParanoid" id="D0NZB7"/>
<dbReference type="OrthoDB" id="127916at2759"/>
<dbReference type="Proteomes" id="UP000006643">
    <property type="component" value="Partially assembled WGS sequence"/>
</dbReference>
<dbReference type="GO" id="GO:0005576">
    <property type="term" value="C:extracellular region"/>
    <property type="evidence" value="ECO:0007669"/>
    <property type="project" value="UniProtKB-SubCell"/>
</dbReference>
<dbReference type="GO" id="GO:0043657">
    <property type="term" value="C:host cell"/>
    <property type="evidence" value="ECO:0007669"/>
    <property type="project" value="UniProtKB-SubCell"/>
</dbReference>
<sequence>MRSFLYGILAFAVLARSSAVAAFPIPDESRPLSKTSPDTVAPRSLRVEAQEVIQSGRGDGYGGFWKNIIPSTNKIIKKPDIKIGKLIEAAKKAKKKMTKS</sequence>
<organism>
    <name type="scientific">Phytophthora infestans (strain T30-4)</name>
    <name type="common">Potato late blight agent</name>
    <dbReference type="NCBI Taxonomy" id="403677"/>
    <lineage>
        <taxon>Eukaryota</taxon>
        <taxon>Sar</taxon>
        <taxon>Stramenopiles</taxon>
        <taxon>Oomycota</taxon>
        <taxon>Peronosporales</taxon>
        <taxon>Peronosporaceae</taxon>
        <taxon>Phytophthora</taxon>
    </lineage>
</organism>
<reference key="1">
    <citation type="journal article" date="2009" name="Nature">
        <title>Genome sequence and analysis of the Irish potato famine pathogen Phytophthora infestans.</title>
        <authorList>
            <consortium name="The Broad Institute Genome Sequencing Platform"/>
            <person name="Haas B.J."/>
            <person name="Kamoun S."/>
            <person name="Zody M.C."/>
            <person name="Jiang R.H."/>
            <person name="Handsaker R.E."/>
            <person name="Cano L.M."/>
            <person name="Grabherr M."/>
            <person name="Kodira C.D."/>
            <person name="Raffaele S."/>
            <person name="Torto-Alalibo T."/>
            <person name="Bozkurt T.O."/>
            <person name="Ah-Fong A.M."/>
            <person name="Alvarado L."/>
            <person name="Anderson V.L."/>
            <person name="Armstrong M.R."/>
            <person name="Avrova A."/>
            <person name="Baxter L."/>
            <person name="Beynon J."/>
            <person name="Boevink P.C."/>
            <person name="Bollmann S.R."/>
            <person name="Bos J.I."/>
            <person name="Bulone V."/>
            <person name="Cai G."/>
            <person name="Cakir C."/>
            <person name="Carrington J.C."/>
            <person name="Chawner M."/>
            <person name="Conti L."/>
            <person name="Costanzo S."/>
            <person name="Ewan R."/>
            <person name="Fahlgren N."/>
            <person name="Fischbach M.A."/>
            <person name="Fugelstad J."/>
            <person name="Gilroy E.M."/>
            <person name="Gnerre S."/>
            <person name="Green P.J."/>
            <person name="Grenville-Briggs L.J."/>
            <person name="Griffith J."/>
            <person name="Grunwald N.J."/>
            <person name="Horn K."/>
            <person name="Horner N.R."/>
            <person name="Hu C.H."/>
            <person name="Huitema E."/>
            <person name="Jeong D.H."/>
            <person name="Jones A.M."/>
            <person name="Jones J.D."/>
            <person name="Jones R.W."/>
            <person name="Karlsson E.K."/>
            <person name="Kunjeti S.G."/>
            <person name="Lamour K."/>
            <person name="Liu Z."/>
            <person name="Ma L."/>
            <person name="Maclean D."/>
            <person name="Chibucos M.C."/>
            <person name="McDonald H."/>
            <person name="McWalters J."/>
            <person name="Meijer H.J."/>
            <person name="Morgan W."/>
            <person name="Morris P.F."/>
            <person name="Munro C.A."/>
            <person name="O'Neill K."/>
            <person name="Ospina-Giraldo M."/>
            <person name="Pinzon A."/>
            <person name="Pritchard L."/>
            <person name="Ramsahoye B."/>
            <person name="Ren Q."/>
            <person name="Restrepo S."/>
            <person name="Roy S."/>
            <person name="Sadanandom A."/>
            <person name="Savidor A."/>
            <person name="Schornack S."/>
            <person name="Schwartz D.C."/>
            <person name="Schumann U.D."/>
            <person name="Schwessinger B."/>
            <person name="Seyer L."/>
            <person name="Sharpe T."/>
            <person name="Silvar C."/>
            <person name="Song J."/>
            <person name="Studholme D.J."/>
            <person name="Sykes S."/>
            <person name="Thines M."/>
            <person name="van de Vondervoort P.J."/>
            <person name="Phuntumart V."/>
            <person name="Wawra S."/>
            <person name="Weide R."/>
            <person name="Win J."/>
            <person name="Young C."/>
            <person name="Zhou S."/>
            <person name="Fry W."/>
            <person name="Meyers B.C."/>
            <person name="van West P."/>
            <person name="Ristaino J."/>
            <person name="Govers F."/>
            <person name="Birch P.R."/>
            <person name="Whisson S.C."/>
            <person name="Judelson H.S."/>
            <person name="Nusbaum C."/>
        </authorList>
    </citation>
    <scope>NUCLEOTIDE SEQUENCE [LARGE SCALE GENOMIC DNA]</scope>
    <source>
        <strain>T30-4</strain>
    </source>
</reference>
<reference key="2">
    <citation type="journal article" date="2019" name="Front. Plant Sci.">
        <title>The Phytophthora RXLR Effector Avrblb2 Modulates Plant Immunity by Interfering With Ca2+ Signaling Pathway.</title>
        <authorList>
            <person name="Naveed Z.A."/>
            <person name="Bibi S."/>
            <person name="Ali G.S."/>
        </authorList>
    </citation>
    <scope>INTERACTION WITH HOST CALMODULIN</scope>
    <scope>SUBCELLULAR LOCATION</scope>
    <scope>FUNCTION</scope>
</reference>
<gene>
    <name type="ORF">PITG_18683</name>
</gene>
<keyword id="KW-1185">Reference proteome</keyword>
<keyword id="KW-0964">Secreted</keyword>
<keyword id="KW-0732">Signal</keyword>
<keyword id="KW-0843">Virulence</keyword>